<comment type="function">
    <text evidence="1">Binds to the 50S ribosomal subunit and prevents its association with the 30S ribosomal subunit to form the 70S initiation complex.</text>
</comment>
<comment type="similarity">
    <text evidence="1">Belongs to the eIF-6 family.</text>
</comment>
<organism>
    <name type="scientific">Archaeoglobus fulgidus (strain ATCC 49558 / DSM 4304 / JCM 9628 / NBRC 100126 / VC-16)</name>
    <dbReference type="NCBI Taxonomy" id="224325"/>
    <lineage>
        <taxon>Archaea</taxon>
        <taxon>Methanobacteriati</taxon>
        <taxon>Methanobacteriota</taxon>
        <taxon>Archaeoglobi</taxon>
        <taxon>Archaeoglobales</taxon>
        <taxon>Archaeoglobaceae</taxon>
        <taxon>Archaeoglobus</taxon>
    </lineage>
</organism>
<proteinExistence type="inferred from homology"/>
<sequence>MKVAVNGNPLIGLYAKVSEEYAVVGVNHEPLIDAIQEKLDVDVIVTKIAGSELVGAMMALNSRGAVVSDQVLSSELRELEKSLDVLVIETPMTCFGNNLLINDRGGIANPEMESSVVEKVADFMDIELVKGTVGGIKTVGMAAVVTNRGGLANPNINEWEAKKLQEVAGVEVLTGTVNFGTDMVGSGLVANSKGYVVGRDTTGFELGIVEEALFP</sequence>
<feature type="chain" id="PRO_0000153744" description="Translation initiation factor 6">
    <location>
        <begin position="1"/>
        <end position="215"/>
    </location>
</feature>
<gene>
    <name evidence="1" type="primary">eif6</name>
    <name type="ordered locus">AF_2065</name>
</gene>
<protein>
    <recommendedName>
        <fullName evidence="1">Translation initiation factor 6</fullName>
        <shortName evidence="1">aIF-6</shortName>
    </recommendedName>
</protein>
<name>IF6_ARCFU</name>
<dbReference type="EMBL" id="AE000782">
    <property type="protein sequence ID" value="AAB89188.1"/>
    <property type="molecule type" value="Genomic_DNA"/>
</dbReference>
<dbReference type="PIR" id="H69507">
    <property type="entry name" value="H69507"/>
</dbReference>
<dbReference type="RefSeq" id="WP_010879557.1">
    <property type="nucleotide sequence ID" value="NC_000917.1"/>
</dbReference>
<dbReference type="SMR" id="O28214"/>
<dbReference type="STRING" id="224325.AF_2065"/>
<dbReference type="PaxDb" id="224325-AF_2065"/>
<dbReference type="EnsemblBacteria" id="AAB89188">
    <property type="protein sequence ID" value="AAB89188"/>
    <property type="gene ID" value="AF_2065"/>
</dbReference>
<dbReference type="KEGG" id="afu:AF_2065"/>
<dbReference type="eggNOG" id="arCOG04176">
    <property type="taxonomic scope" value="Archaea"/>
</dbReference>
<dbReference type="HOGENOM" id="CLU_071894_1_0_2"/>
<dbReference type="OrthoDB" id="33582at2157"/>
<dbReference type="PhylomeDB" id="O28214"/>
<dbReference type="Proteomes" id="UP000002199">
    <property type="component" value="Chromosome"/>
</dbReference>
<dbReference type="GO" id="GO:0043022">
    <property type="term" value="F:ribosome binding"/>
    <property type="evidence" value="ECO:0007669"/>
    <property type="project" value="InterPro"/>
</dbReference>
<dbReference type="GO" id="GO:0003743">
    <property type="term" value="F:translation initiation factor activity"/>
    <property type="evidence" value="ECO:0007669"/>
    <property type="project" value="UniProtKB-UniRule"/>
</dbReference>
<dbReference type="GO" id="GO:0042256">
    <property type="term" value="P:cytosolic ribosome assembly"/>
    <property type="evidence" value="ECO:0007669"/>
    <property type="project" value="InterPro"/>
</dbReference>
<dbReference type="Gene3D" id="3.75.10.10">
    <property type="entry name" value="L-arginine/glycine Amidinotransferase, Chain A"/>
    <property type="match status" value="1"/>
</dbReference>
<dbReference type="HAMAP" id="MF_00032">
    <property type="entry name" value="eIF_6"/>
    <property type="match status" value="1"/>
</dbReference>
<dbReference type="InterPro" id="IPR002769">
    <property type="entry name" value="eIF6"/>
</dbReference>
<dbReference type="NCBIfam" id="TIGR00323">
    <property type="entry name" value="eIF-6"/>
    <property type="match status" value="1"/>
</dbReference>
<dbReference type="NCBIfam" id="NF003132">
    <property type="entry name" value="PRK04046.2-4"/>
    <property type="match status" value="1"/>
</dbReference>
<dbReference type="PANTHER" id="PTHR10784">
    <property type="entry name" value="TRANSLATION INITIATION FACTOR 6"/>
    <property type="match status" value="1"/>
</dbReference>
<dbReference type="Pfam" id="PF01912">
    <property type="entry name" value="eIF-6"/>
    <property type="match status" value="1"/>
</dbReference>
<dbReference type="PIRSF" id="PIRSF006413">
    <property type="entry name" value="IF-6"/>
    <property type="match status" value="1"/>
</dbReference>
<dbReference type="SMART" id="SM00654">
    <property type="entry name" value="eIF6"/>
    <property type="match status" value="1"/>
</dbReference>
<dbReference type="SUPFAM" id="SSF55909">
    <property type="entry name" value="Pentein"/>
    <property type="match status" value="1"/>
</dbReference>
<accession>O28214</accession>
<evidence type="ECO:0000255" key="1">
    <source>
        <dbReference type="HAMAP-Rule" id="MF_00032"/>
    </source>
</evidence>
<reference key="1">
    <citation type="journal article" date="1997" name="Nature">
        <title>The complete genome sequence of the hyperthermophilic, sulphate-reducing archaeon Archaeoglobus fulgidus.</title>
        <authorList>
            <person name="Klenk H.-P."/>
            <person name="Clayton R.A."/>
            <person name="Tomb J.-F."/>
            <person name="White O."/>
            <person name="Nelson K.E."/>
            <person name="Ketchum K.A."/>
            <person name="Dodson R.J."/>
            <person name="Gwinn M.L."/>
            <person name="Hickey E.K."/>
            <person name="Peterson J.D."/>
            <person name="Richardson D.L."/>
            <person name="Kerlavage A.R."/>
            <person name="Graham D.E."/>
            <person name="Kyrpides N.C."/>
            <person name="Fleischmann R.D."/>
            <person name="Quackenbush J."/>
            <person name="Lee N.H."/>
            <person name="Sutton G.G."/>
            <person name="Gill S.R."/>
            <person name="Kirkness E.F."/>
            <person name="Dougherty B.A."/>
            <person name="McKenney K."/>
            <person name="Adams M.D."/>
            <person name="Loftus B.J."/>
            <person name="Peterson S.N."/>
            <person name="Reich C.I."/>
            <person name="McNeil L.K."/>
            <person name="Badger J.H."/>
            <person name="Glodek A."/>
            <person name="Zhou L."/>
            <person name="Overbeek R."/>
            <person name="Gocayne J.D."/>
            <person name="Weidman J.F."/>
            <person name="McDonald L.A."/>
            <person name="Utterback T.R."/>
            <person name="Cotton M.D."/>
            <person name="Spriggs T."/>
            <person name="Artiach P."/>
            <person name="Kaine B.P."/>
            <person name="Sykes S.M."/>
            <person name="Sadow P.W."/>
            <person name="D'Andrea K.P."/>
            <person name="Bowman C."/>
            <person name="Fujii C."/>
            <person name="Garland S.A."/>
            <person name="Mason T.M."/>
            <person name="Olsen G.J."/>
            <person name="Fraser C.M."/>
            <person name="Smith H.O."/>
            <person name="Woese C.R."/>
            <person name="Venter J.C."/>
        </authorList>
    </citation>
    <scope>NUCLEOTIDE SEQUENCE [LARGE SCALE GENOMIC DNA]</scope>
    <source>
        <strain>ATCC 49558 / DSM 4304 / JCM 9628 / NBRC 100126 / VC-16</strain>
    </source>
</reference>
<keyword id="KW-0396">Initiation factor</keyword>
<keyword id="KW-0648">Protein biosynthesis</keyword>
<keyword id="KW-1185">Reference proteome</keyword>